<dbReference type="EC" id="2.3.1.-"/>
<dbReference type="EMBL" id="U04609">
    <property type="protein sequence ID" value="AAA63600.1"/>
    <property type="molecule type" value="Genomic_DNA"/>
</dbReference>
<dbReference type="RefSeq" id="WP_026192374.1">
    <property type="nucleotide sequence ID" value="NZ_BJNL01000082.1"/>
</dbReference>
<dbReference type="SMR" id="P50326"/>
<dbReference type="GeneID" id="92956825"/>
<dbReference type="GO" id="GO:0005829">
    <property type="term" value="C:cytosol"/>
    <property type="evidence" value="ECO:0007669"/>
    <property type="project" value="InterPro"/>
</dbReference>
<dbReference type="GO" id="GO:0016746">
    <property type="term" value="F:acyltransferase activity"/>
    <property type="evidence" value="ECO:0007669"/>
    <property type="project" value="UniProtKB-UniRule"/>
</dbReference>
<dbReference type="Gene3D" id="3.40.630.30">
    <property type="match status" value="1"/>
</dbReference>
<dbReference type="HAMAP" id="MF_00084">
    <property type="entry name" value="NodA"/>
    <property type="match status" value="1"/>
</dbReference>
<dbReference type="InterPro" id="IPR016181">
    <property type="entry name" value="Acyl_CoA_acyltransferase"/>
</dbReference>
<dbReference type="InterPro" id="IPR003484">
    <property type="entry name" value="NodA"/>
</dbReference>
<dbReference type="InterPro" id="IPR020567">
    <property type="entry name" value="Nodulation_prot_NodA_CS"/>
</dbReference>
<dbReference type="NCBIfam" id="TIGR04245">
    <property type="entry name" value="nodulat_NodA"/>
    <property type="match status" value="1"/>
</dbReference>
<dbReference type="NCBIfam" id="NF001974">
    <property type="entry name" value="PRK00756.1"/>
    <property type="match status" value="1"/>
</dbReference>
<dbReference type="Pfam" id="PF02474">
    <property type="entry name" value="NodA"/>
    <property type="match status" value="1"/>
</dbReference>
<dbReference type="SUPFAM" id="SSF55729">
    <property type="entry name" value="Acyl-CoA N-acyltransferases (Nat)"/>
    <property type="match status" value="1"/>
</dbReference>
<dbReference type="PROSITE" id="PS01349">
    <property type="entry name" value="NODA"/>
    <property type="match status" value="1"/>
</dbReference>
<protein>
    <recommendedName>
        <fullName>Nodulation protein A</fullName>
        <ecNumber>2.3.1.-</ecNumber>
    </recommendedName>
</protein>
<gene>
    <name type="primary">nodA</name>
</gene>
<comment type="function">
    <text evidence="1">N-acyltransferase required for nodulation. Acts in the production of a small, heat-stable compound (Nod) that stimulates mitosis in various plant protoplasts (By similarity).</text>
</comment>
<comment type="subcellular location">
    <subcellularLocation>
        <location evidence="1">Cytoplasm</location>
    </subcellularLocation>
</comment>
<comment type="similarity">
    <text evidence="2">Belongs to the NodA family.</text>
</comment>
<feature type="chain" id="PRO_0000196330" description="Nodulation protein A">
    <location>
        <begin position="1"/>
        <end position="210"/>
    </location>
</feature>
<accession>P50326</accession>
<organism>
    <name type="scientific">Bradyrhizobium elkanii</name>
    <dbReference type="NCBI Taxonomy" id="29448"/>
    <lineage>
        <taxon>Bacteria</taxon>
        <taxon>Pseudomonadati</taxon>
        <taxon>Pseudomonadota</taxon>
        <taxon>Alphaproteobacteria</taxon>
        <taxon>Hyphomicrobiales</taxon>
        <taxon>Nitrobacteraceae</taxon>
        <taxon>Bradyrhizobium</taxon>
    </lineage>
</organism>
<keyword id="KW-0012">Acyltransferase</keyword>
<keyword id="KW-0963">Cytoplasm</keyword>
<keyword id="KW-0536">Nodulation</keyword>
<keyword id="KW-0808">Transferase</keyword>
<sequence>MNIAVSPSAEEPSARTQVQWSLRWESELQLADHAELADFFRKSYGPTGAFNAQPFEGIRSWAGARPEMRVIGYDAHGVAAHIGLLRRFIKIGGVDLLVAELGLYAVRPDLEGLGISHSMRVMYPALQELGVPFGFGTVRPALEKHLTRLVGRRGLATLMPGIRVRSTQADVYPNLSPIRIEDVLVVVFPVGRSMGEWPAGTIIDRNGPEL</sequence>
<reference key="1">
    <citation type="journal article" date="1994" name="Mol. Plant Microbe Interact.">
        <title>DNA sequence of the common nodulation genes of Bradyrhizobium elkanii and their phylogenetic relationship to those of other nodulating bacteria.</title>
        <authorList>
            <person name="Dobert R.C."/>
            <person name="Breil B.T."/>
            <person name="Triplett E.W."/>
        </authorList>
    </citation>
    <scope>NUCLEOTIDE SEQUENCE [GENOMIC DNA]</scope>
    <source>
        <strain>USDA 94</strain>
    </source>
</reference>
<proteinExistence type="inferred from homology"/>
<name>NODA_BRAEL</name>
<evidence type="ECO:0000250" key="1"/>
<evidence type="ECO:0000305" key="2"/>